<reference key="1">
    <citation type="journal article" date="2002" name="Nucleic Acids Res.">
        <title>Genome sequence of Shigella flexneri 2a: insights into pathogenicity through comparison with genomes of Escherichia coli K12 and O157.</title>
        <authorList>
            <person name="Jin Q."/>
            <person name="Yuan Z."/>
            <person name="Xu J."/>
            <person name="Wang Y."/>
            <person name="Shen Y."/>
            <person name="Lu W."/>
            <person name="Wang J."/>
            <person name="Liu H."/>
            <person name="Yang J."/>
            <person name="Yang F."/>
            <person name="Zhang X."/>
            <person name="Zhang J."/>
            <person name="Yang G."/>
            <person name="Wu H."/>
            <person name="Qu D."/>
            <person name="Dong J."/>
            <person name="Sun L."/>
            <person name="Xue Y."/>
            <person name="Zhao A."/>
            <person name="Gao Y."/>
            <person name="Zhu J."/>
            <person name="Kan B."/>
            <person name="Ding K."/>
            <person name="Chen S."/>
            <person name="Cheng H."/>
            <person name="Yao Z."/>
            <person name="He B."/>
            <person name="Chen R."/>
            <person name="Ma D."/>
            <person name="Qiang B."/>
            <person name="Wen Y."/>
            <person name="Hou Y."/>
            <person name="Yu J."/>
        </authorList>
    </citation>
    <scope>NUCLEOTIDE SEQUENCE [LARGE SCALE GENOMIC DNA]</scope>
    <source>
        <strain>301 / Serotype 2a</strain>
    </source>
</reference>
<reference key="2">
    <citation type="journal article" date="2003" name="Infect. Immun.">
        <title>Complete genome sequence and comparative genomics of Shigella flexneri serotype 2a strain 2457T.</title>
        <authorList>
            <person name="Wei J."/>
            <person name="Goldberg M.B."/>
            <person name="Burland V."/>
            <person name="Venkatesan M.M."/>
            <person name="Deng W."/>
            <person name="Fournier G."/>
            <person name="Mayhew G.F."/>
            <person name="Plunkett G. III"/>
            <person name="Rose D.J."/>
            <person name="Darling A."/>
            <person name="Mau B."/>
            <person name="Perna N.T."/>
            <person name="Payne S.M."/>
            <person name="Runyen-Janecky L.J."/>
            <person name="Zhou S."/>
            <person name="Schwartz D.C."/>
            <person name="Blattner F.R."/>
        </authorList>
    </citation>
    <scope>NUCLEOTIDE SEQUENCE [LARGE SCALE GENOMIC DNA]</scope>
    <source>
        <strain>ATCC 700930 / 2457T / Serotype 2a</strain>
    </source>
</reference>
<sequence length="179" mass="20796">MNPPINFLPWRQQRRTAFLRFWLLMFVAPLLLAVGITLILRLTGSAEARIDAVLLQAEQQLARSLQITKPRLLEQQQLREQRSQRQRQRQFTRDWQSALEALAALLPEHAWLTTISWQQGTLEIKGLTTSITALNALETSLRQDASFHLNQRGATQQDAQGRWQFEYQLTRKVSDEHVL</sequence>
<name>HOFN_SHIFL</name>
<gene>
    <name type="primary">hofN</name>
    <name type="ordered locus">SF3412</name>
    <name type="ordered locus">S4350</name>
</gene>
<keyword id="KW-1003">Cell membrane</keyword>
<keyword id="KW-0472">Membrane</keyword>
<keyword id="KW-1185">Reference proteome</keyword>
<keyword id="KW-0812">Transmembrane</keyword>
<keyword id="KW-1133">Transmembrane helix</keyword>
<feature type="chain" id="PRO_0000169540" description="Putative DNA utilization protein HofN">
    <location>
        <begin position="1"/>
        <end position="179"/>
    </location>
</feature>
<feature type="transmembrane region" description="Helical" evidence="2">
    <location>
        <begin position="19"/>
        <end position="39"/>
    </location>
</feature>
<comment type="function">
    <text evidence="1">Required for the use of extracellular DNA as a nutrient.</text>
</comment>
<comment type="subcellular location">
    <subcellularLocation>
        <location evidence="3">Cell membrane</location>
        <topology evidence="3">Single-pass membrane protein</topology>
    </subcellularLocation>
</comment>
<organism>
    <name type="scientific">Shigella flexneri</name>
    <dbReference type="NCBI Taxonomy" id="623"/>
    <lineage>
        <taxon>Bacteria</taxon>
        <taxon>Pseudomonadati</taxon>
        <taxon>Pseudomonadota</taxon>
        <taxon>Gammaproteobacteria</taxon>
        <taxon>Enterobacterales</taxon>
        <taxon>Enterobacteriaceae</taxon>
        <taxon>Shigella</taxon>
    </lineage>
</organism>
<proteinExistence type="inferred from homology"/>
<dbReference type="EMBL" id="AE005674">
    <property type="protein sequence ID" value="AAN44873.1"/>
    <property type="molecule type" value="Genomic_DNA"/>
</dbReference>
<dbReference type="EMBL" id="AE014073">
    <property type="protein sequence ID" value="AAP19305.1"/>
    <property type="molecule type" value="Genomic_DNA"/>
</dbReference>
<dbReference type="RefSeq" id="WP_001069315.1">
    <property type="nucleotide sequence ID" value="NZ_WPGW01000003.1"/>
</dbReference>
<dbReference type="SMR" id="P64635"/>
<dbReference type="STRING" id="198214.SF3412"/>
<dbReference type="PaxDb" id="198214-SF3412"/>
<dbReference type="GeneID" id="75206332"/>
<dbReference type="KEGG" id="sfl:SF3412"/>
<dbReference type="KEGG" id="sfx:S4350"/>
<dbReference type="PATRIC" id="fig|198214.7.peg.4027"/>
<dbReference type="HOGENOM" id="CLU_081304_2_0_6"/>
<dbReference type="Proteomes" id="UP000001006">
    <property type="component" value="Chromosome"/>
</dbReference>
<dbReference type="Proteomes" id="UP000002673">
    <property type="component" value="Chromosome"/>
</dbReference>
<dbReference type="GO" id="GO:0005886">
    <property type="term" value="C:plasma membrane"/>
    <property type="evidence" value="ECO:0007669"/>
    <property type="project" value="UniProtKB-SubCell"/>
</dbReference>
<dbReference type="InterPro" id="IPR052534">
    <property type="entry name" value="Extracell_DNA_Util/SecSys_Comp"/>
</dbReference>
<dbReference type="InterPro" id="IPR007813">
    <property type="entry name" value="PilN"/>
</dbReference>
<dbReference type="PANTHER" id="PTHR40278">
    <property type="entry name" value="DNA UTILIZATION PROTEIN HOFN"/>
    <property type="match status" value="1"/>
</dbReference>
<dbReference type="PANTHER" id="PTHR40278:SF1">
    <property type="entry name" value="DNA UTILIZATION PROTEIN HOFN"/>
    <property type="match status" value="1"/>
</dbReference>
<dbReference type="Pfam" id="PF05137">
    <property type="entry name" value="PilN"/>
    <property type="match status" value="1"/>
</dbReference>
<accession>P64635</accession>
<accession>P45752</accession>
<evidence type="ECO:0000250" key="1"/>
<evidence type="ECO:0000255" key="2"/>
<evidence type="ECO:0000305" key="3"/>
<protein>
    <recommendedName>
        <fullName>Putative DNA utilization protein HofN</fullName>
    </recommendedName>
</protein>